<proteinExistence type="inferred from homology"/>
<feature type="chain" id="PRO_1000012132" description="DNA repair protein RecO">
    <location>
        <begin position="1"/>
        <end position="236"/>
    </location>
</feature>
<gene>
    <name evidence="1" type="primary">recO</name>
    <name type="ordered locus">CGSHiGG_04460</name>
</gene>
<evidence type="ECO:0000255" key="1">
    <source>
        <dbReference type="HAMAP-Rule" id="MF_00201"/>
    </source>
</evidence>
<organism>
    <name type="scientific">Haemophilus influenzae (strain PittGG)</name>
    <dbReference type="NCBI Taxonomy" id="374931"/>
    <lineage>
        <taxon>Bacteria</taxon>
        <taxon>Pseudomonadati</taxon>
        <taxon>Pseudomonadota</taxon>
        <taxon>Gammaproteobacteria</taxon>
        <taxon>Pasteurellales</taxon>
        <taxon>Pasteurellaceae</taxon>
        <taxon>Haemophilus</taxon>
    </lineage>
</organism>
<keyword id="KW-0227">DNA damage</keyword>
<keyword id="KW-0233">DNA recombination</keyword>
<keyword id="KW-0234">DNA repair</keyword>
<sequence>MQSELQRGFVLHRRPYSETSLLVDLFTEESGRLTVIAKGARAKRSSWKSVLQPFTPLLLRWTGKSTLKTLAKAEPAAITLPLQQIALYSGFYVNELLTRVIESETPNPALFQHYLKCLTGLATETNIEPTLRLFEFQLLQILGYGVDFLHCAGSGEPVDFSMTYRYREEKGFIASLVKDNLTFYGRDLLAFEALDFSDDAVRQAAKRFTRIALKPYLGDKPLKSRELFTQNILLLK</sequence>
<dbReference type="EMBL" id="CP000672">
    <property type="protein sequence ID" value="ABQ99848.1"/>
    <property type="molecule type" value="Genomic_DNA"/>
</dbReference>
<dbReference type="SMR" id="A5UGE3"/>
<dbReference type="KEGG" id="hiq:CGSHiGG_04460"/>
<dbReference type="HOGENOM" id="CLU_066645_1_0_6"/>
<dbReference type="Proteomes" id="UP000001990">
    <property type="component" value="Chromosome"/>
</dbReference>
<dbReference type="GO" id="GO:0043590">
    <property type="term" value="C:bacterial nucleoid"/>
    <property type="evidence" value="ECO:0007669"/>
    <property type="project" value="TreeGrafter"/>
</dbReference>
<dbReference type="GO" id="GO:0006310">
    <property type="term" value="P:DNA recombination"/>
    <property type="evidence" value="ECO:0007669"/>
    <property type="project" value="UniProtKB-UniRule"/>
</dbReference>
<dbReference type="GO" id="GO:0006302">
    <property type="term" value="P:double-strand break repair"/>
    <property type="evidence" value="ECO:0007669"/>
    <property type="project" value="TreeGrafter"/>
</dbReference>
<dbReference type="Gene3D" id="2.40.50.140">
    <property type="entry name" value="Nucleic acid-binding proteins"/>
    <property type="match status" value="1"/>
</dbReference>
<dbReference type="Gene3D" id="1.20.1440.120">
    <property type="entry name" value="Recombination protein O, C-terminal domain"/>
    <property type="match status" value="1"/>
</dbReference>
<dbReference type="HAMAP" id="MF_00201">
    <property type="entry name" value="RecO"/>
    <property type="match status" value="1"/>
</dbReference>
<dbReference type="InterPro" id="IPR037278">
    <property type="entry name" value="ARFGAP/RecO"/>
</dbReference>
<dbReference type="InterPro" id="IPR022572">
    <property type="entry name" value="DNA_rep/recomb_RecO_N"/>
</dbReference>
<dbReference type="InterPro" id="IPR012340">
    <property type="entry name" value="NA-bd_OB-fold"/>
</dbReference>
<dbReference type="InterPro" id="IPR003717">
    <property type="entry name" value="RecO"/>
</dbReference>
<dbReference type="InterPro" id="IPR042242">
    <property type="entry name" value="RecO_C"/>
</dbReference>
<dbReference type="NCBIfam" id="TIGR00613">
    <property type="entry name" value="reco"/>
    <property type="match status" value="1"/>
</dbReference>
<dbReference type="PANTHER" id="PTHR33991">
    <property type="entry name" value="DNA REPAIR PROTEIN RECO"/>
    <property type="match status" value="1"/>
</dbReference>
<dbReference type="PANTHER" id="PTHR33991:SF1">
    <property type="entry name" value="DNA REPAIR PROTEIN RECO"/>
    <property type="match status" value="1"/>
</dbReference>
<dbReference type="Pfam" id="PF02565">
    <property type="entry name" value="RecO_C"/>
    <property type="match status" value="1"/>
</dbReference>
<dbReference type="Pfam" id="PF11967">
    <property type="entry name" value="RecO_N"/>
    <property type="match status" value="1"/>
</dbReference>
<dbReference type="SUPFAM" id="SSF57863">
    <property type="entry name" value="ArfGap/RecO-like zinc finger"/>
    <property type="match status" value="1"/>
</dbReference>
<dbReference type="SUPFAM" id="SSF50249">
    <property type="entry name" value="Nucleic acid-binding proteins"/>
    <property type="match status" value="1"/>
</dbReference>
<protein>
    <recommendedName>
        <fullName evidence="1">DNA repair protein RecO</fullName>
    </recommendedName>
    <alternativeName>
        <fullName evidence="1">Recombination protein O</fullName>
    </alternativeName>
</protein>
<accession>A5UGE3</accession>
<reference key="1">
    <citation type="journal article" date="2007" name="Genome Biol.">
        <title>Characterization and modeling of the Haemophilus influenzae core and supragenomes based on the complete genomic sequences of Rd and 12 clinical nontypeable strains.</title>
        <authorList>
            <person name="Hogg J.S."/>
            <person name="Hu F.Z."/>
            <person name="Janto B."/>
            <person name="Boissy R."/>
            <person name="Hayes J."/>
            <person name="Keefe R."/>
            <person name="Post J.C."/>
            <person name="Ehrlich G.D."/>
        </authorList>
    </citation>
    <scope>NUCLEOTIDE SEQUENCE [LARGE SCALE GENOMIC DNA]</scope>
    <source>
        <strain>PittGG</strain>
    </source>
</reference>
<comment type="function">
    <text evidence="1">Involved in DNA repair and RecF pathway recombination.</text>
</comment>
<comment type="similarity">
    <text evidence="1">Belongs to the RecO family.</text>
</comment>
<name>RECO_HAEIG</name>